<organism>
    <name type="scientific">Bacillus subtilis (strain 168)</name>
    <dbReference type="NCBI Taxonomy" id="224308"/>
    <lineage>
        <taxon>Bacteria</taxon>
        <taxon>Bacillati</taxon>
        <taxon>Bacillota</taxon>
        <taxon>Bacilli</taxon>
        <taxon>Bacillales</taxon>
        <taxon>Bacillaceae</taxon>
        <taxon>Bacillus</taxon>
    </lineage>
</organism>
<feature type="chain" id="PRO_0000049587" description="Uncharacterized protein YitP">
    <location>
        <begin position="1"/>
        <end position="178"/>
    </location>
</feature>
<feature type="transmembrane region" description="Helical" evidence="1">
    <location>
        <begin position="7"/>
        <end position="29"/>
    </location>
</feature>
<evidence type="ECO:0000255" key="1"/>
<evidence type="ECO:0000305" key="2"/>
<keyword id="KW-0472">Membrane</keyword>
<keyword id="KW-1185">Reference proteome</keyword>
<keyword id="KW-0812">Transmembrane</keyword>
<keyword id="KW-1133">Transmembrane helix</keyword>
<proteinExistence type="predicted"/>
<accession>O06751</accession>
<sequence length="178" mass="19924">MQKSISFFVIFSILWGSLFLFSIIGSLGTTPIPLTKDSKFLMSSILPQGWGFFSKNPRDTAIGLYEAENASAKVRWPNMRADNLFGLYRYGRSQGVEMGVIYSQVGKEQWTACKEKDLGACKSKAKTVQLKTPAPRPLLCGSYYLTKEDIVPWSYSKYTPSSYQVKSIVKVVISCSKT</sequence>
<protein>
    <recommendedName>
        <fullName>Uncharacterized protein YitP</fullName>
    </recommendedName>
</protein>
<name>YITP_BACSU</name>
<dbReference type="EMBL" id="Y09476">
    <property type="protein sequence ID" value="CAA70625.1"/>
    <property type="molecule type" value="Genomic_DNA"/>
</dbReference>
<dbReference type="EMBL" id="AL009126">
    <property type="protein sequence ID" value="CAB12947.1"/>
    <property type="molecule type" value="Genomic_DNA"/>
</dbReference>
<dbReference type="PIR" id="A69841">
    <property type="entry name" value="A69841"/>
</dbReference>
<dbReference type="RefSeq" id="NP_388988.1">
    <property type="nucleotide sequence ID" value="NC_000964.3"/>
</dbReference>
<dbReference type="RefSeq" id="WP_003245405.1">
    <property type="nucleotide sequence ID" value="NZ_OZ025638.1"/>
</dbReference>
<dbReference type="FunCoup" id="O06751">
    <property type="interactions" value="28"/>
</dbReference>
<dbReference type="STRING" id="224308.BSU11070"/>
<dbReference type="TCDB" id="9.A.31.1.4">
    <property type="family name" value="the putative sdpab peptide antibiotic-like killing factor exporter (sdpab) family"/>
</dbReference>
<dbReference type="PaxDb" id="224308-BSU11070"/>
<dbReference type="DNASU" id="939348"/>
<dbReference type="EnsemblBacteria" id="CAB12947">
    <property type="protein sequence ID" value="CAB12947"/>
    <property type="gene ID" value="BSU_11070"/>
</dbReference>
<dbReference type="GeneID" id="939348"/>
<dbReference type="KEGG" id="bsu:BSU11070"/>
<dbReference type="PATRIC" id="fig|224308.179.peg.1188"/>
<dbReference type="eggNOG" id="ENOG503348B">
    <property type="taxonomic scope" value="Bacteria"/>
</dbReference>
<dbReference type="InParanoid" id="O06751"/>
<dbReference type="OrthoDB" id="799068at2"/>
<dbReference type="BioCyc" id="BSUB:BSU11070-MONOMER"/>
<dbReference type="Proteomes" id="UP000001570">
    <property type="component" value="Chromosome"/>
</dbReference>
<dbReference type="GO" id="GO:0016020">
    <property type="term" value="C:membrane"/>
    <property type="evidence" value="ECO:0007669"/>
    <property type="project" value="UniProtKB-SubCell"/>
</dbReference>
<dbReference type="InterPro" id="IPR023902">
    <property type="entry name" value="Sporulation_SdpA"/>
</dbReference>
<dbReference type="NCBIfam" id="TIGR04034">
    <property type="entry name" value="export_SdpA"/>
    <property type="match status" value="1"/>
</dbReference>
<dbReference type="Pfam" id="PF17418">
    <property type="entry name" value="SdpA"/>
    <property type="match status" value="1"/>
</dbReference>
<reference key="1">
    <citation type="journal article" date="1997" name="Microbiology">
        <title>A Bacillus subtilis chromosome segment at the 100 degrees to 102 degrees position encoding 11 membrane proteins.</title>
        <authorList>
            <person name="Roche B."/>
            <person name="Autret S."/>
            <person name="Levine A."/>
            <person name="Vannier F."/>
            <person name="Medina N."/>
            <person name="Seror S.J."/>
        </authorList>
    </citation>
    <scope>NUCLEOTIDE SEQUENCE [GENOMIC DNA]</scope>
</reference>
<reference key="2">
    <citation type="journal article" date="1997" name="Nature">
        <title>The complete genome sequence of the Gram-positive bacterium Bacillus subtilis.</title>
        <authorList>
            <person name="Kunst F."/>
            <person name="Ogasawara N."/>
            <person name="Moszer I."/>
            <person name="Albertini A.M."/>
            <person name="Alloni G."/>
            <person name="Azevedo V."/>
            <person name="Bertero M.G."/>
            <person name="Bessieres P."/>
            <person name="Bolotin A."/>
            <person name="Borchert S."/>
            <person name="Borriss R."/>
            <person name="Boursier L."/>
            <person name="Brans A."/>
            <person name="Braun M."/>
            <person name="Brignell S.C."/>
            <person name="Bron S."/>
            <person name="Brouillet S."/>
            <person name="Bruschi C.V."/>
            <person name="Caldwell B."/>
            <person name="Capuano V."/>
            <person name="Carter N.M."/>
            <person name="Choi S.-K."/>
            <person name="Codani J.-J."/>
            <person name="Connerton I.F."/>
            <person name="Cummings N.J."/>
            <person name="Daniel R.A."/>
            <person name="Denizot F."/>
            <person name="Devine K.M."/>
            <person name="Duesterhoeft A."/>
            <person name="Ehrlich S.D."/>
            <person name="Emmerson P.T."/>
            <person name="Entian K.-D."/>
            <person name="Errington J."/>
            <person name="Fabret C."/>
            <person name="Ferrari E."/>
            <person name="Foulger D."/>
            <person name="Fritz C."/>
            <person name="Fujita M."/>
            <person name="Fujita Y."/>
            <person name="Fuma S."/>
            <person name="Galizzi A."/>
            <person name="Galleron N."/>
            <person name="Ghim S.-Y."/>
            <person name="Glaser P."/>
            <person name="Goffeau A."/>
            <person name="Golightly E.J."/>
            <person name="Grandi G."/>
            <person name="Guiseppi G."/>
            <person name="Guy B.J."/>
            <person name="Haga K."/>
            <person name="Haiech J."/>
            <person name="Harwood C.R."/>
            <person name="Henaut A."/>
            <person name="Hilbert H."/>
            <person name="Holsappel S."/>
            <person name="Hosono S."/>
            <person name="Hullo M.-F."/>
            <person name="Itaya M."/>
            <person name="Jones L.-M."/>
            <person name="Joris B."/>
            <person name="Karamata D."/>
            <person name="Kasahara Y."/>
            <person name="Klaerr-Blanchard M."/>
            <person name="Klein C."/>
            <person name="Kobayashi Y."/>
            <person name="Koetter P."/>
            <person name="Koningstein G."/>
            <person name="Krogh S."/>
            <person name="Kumano M."/>
            <person name="Kurita K."/>
            <person name="Lapidus A."/>
            <person name="Lardinois S."/>
            <person name="Lauber J."/>
            <person name="Lazarevic V."/>
            <person name="Lee S.-M."/>
            <person name="Levine A."/>
            <person name="Liu H."/>
            <person name="Masuda S."/>
            <person name="Mauel C."/>
            <person name="Medigue C."/>
            <person name="Medina N."/>
            <person name="Mellado R.P."/>
            <person name="Mizuno M."/>
            <person name="Moestl D."/>
            <person name="Nakai S."/>
            <person name="Noback M."/>
            <person name="Noone D."/>
            <person name="O'Reilly M."/>
            <person name="Ogawa K."/>
            <person name="Ogiwara A."/>
            <person name="Oudega B."/>
            <person name="Park S.-H."/>
            <person name="Parro V."/>
            <person name="Pohl T.M."/>
            <person name="Portetelle D."/>
            <person name="Porwollik S."/>
            <person name="Prescott A.M."/>
            <person name="Presecan E."/>
            <person name="Pujic P."/>
            <person name="Purnelle B."/>
            <person name="Rapoport G."/>
            <person name="Rey M."/>
            <person name="Reynolds S."/>
            <person name="Rieger M."/>
            <person name="Rivolta C."/>
            <person name="Rocha E."/>
            <person name="Roche B."/>
            <person name="Rose M."/>
            <person name="Sadaie Y."/>
            <person name="Sato T."/>
            <person name="Scanlan E."/>
            <person name="Schleich S."/>
            <person name="Schroeter R."/>
            <person name="Scoffone F."/>
            <person name="Sekiguchi J."/>
            <person name="Sekowska A."/>
            <person name="Seror S.J."/>
            <person name="Serror P."/>
            <person name="Shin B.-S."/>
            <person name="Soldo B."/>
            <person name="Sorokin A."/>
            <person name="Tacconi E."/>
            <person name="Takagi T."/>
            <person name="Takahashi H."/>
            <person name="Takemaru K."/>
            <person name="Takeuchi M."/>
            <person name="Tamakoshi A."/>
            <person name="Tanaka T."/>
            <person name="Terpstra P."/>
            <person name="Tognoni A."/>
            <person name="Tosato V."/>
            <person name="Uchiyama S."/>
            <person name="Vandenbol M."/>
            <person name="Vannier F."/>
            <person name="Vassarotti A."/>
            <person name="Viari A."/>
            <person name="Wambutt R."/>
            <person name="Wedler E."/>
            <person name="Wedler H."/>
            <person name="Weitzenegger T."/>
            <person name="Winters P."/>
            <person name="Wipat A."/>
            <person name="Yamamoto H."/>
            <person name="Yamane K."/>
            <person name="Yasumoto K."/>
            <person name="Yata K."/>
            <person name="Yoshida K."/>
            <person name="Yoshikawa H.-F."/>
            <person name="Zumstein E."/>
            <person name="Yoshikawa H."/>
            <person name="Danchin A."/>
        </authorList>
    </citation>
    <scope>NUCLEOTIDE SEQUENCE [LARGE SCALE GENOMIC DNA]</scope>
    <source>
        <strain>168</strain>
    </source>
</reference>
<gene>
    <name type="primary">yitP</name>
    <name type="ordered locus">BSU11070</name>
</gene>
<comment type="subcellular location">
    <subcellularLocation>
        <location evidence="2">Membrane</location>
        <topology evidence="2">Single-pass membrane protein</topology>
    </subcellularLocation>
</comment>